<feature type="chain" id="PRO_0000235168" description="Bifunctional enzyme Fae/Hps">
    <location>
        <begin position="1"/>
        <end position="392"/>
    </location>
</feature>
<feature type="region of interest" description="Formaldehyde-activating enzyme" evidence="1">
    <location>
        <begin position="1"/>
        <end position="161"/>
    </location>
</feature>
<feature type="region of interest" description="3-hexulose-6-phosphate synthase" evidence="1">
    <location>
        <begin position="162"/>
        <end position="392"/>
    </location>
</feature>
<feature type="active site" description="Proton donor" evidence="1">
    <location>
        <position position="17"/>
    </location>
</feature>
<feature type="binding site" evidence="1">
    <location>
        <position position="19"/>
    </location>
    <ligand>
        <name>substrate</name>
    </ligand>
</feature>
<feature type="binding site" evidence="1">
    <location>
        <position position="48"/>
    </location>
    <ligand>
        <name>substrate</name>
    </ligand>
</feature>
<feature type="binding site" evidence="1">
    <location>
        <position position="66"/>
    </location>
    <ligand>
        <name>substrate</name>
    </ligand>
</feature>
<feature type="binding site" evidence="1">
    <location>
        <position position="68"/>
    </location>
    <ligand>
        <name>substrate</name>
    </ligand>
</feature>
<feature type="binding site" evidence="1">
    <location>
        <position position="83"/>
    </location>
    <ligand>
        <name>substrate</name>
    </ligand>
</feature>
<comment type="function">
    <text evidence="1 2">Catalyzes the condensation of formaldehyde with tetrahydromethanopterin (H(4)MPT) to 5,10-methylenetetrahydromethanopterin.</text>
</comment>
<comment type="function">
    <text evidence="1 2">Catalyzes the reversible formation of ribulose-5-phosphate and formaldehyde from 3-hexulose-6-phosphate.</text>
</comment>
<comment type="catalytic activity">
    <reaction evidence="1 2">
        <text>5,6,7,8-tetrahydromethanopterin + formaldehyde = 5,10-methylenetetrahydromethanopterin + H2O</text>
        <dbReference type="Rhea" id="RHEA:24678"/>
        <dbReference type="ChEBI" id="CHEBI:15377"/>
        <dbReference type="ChEBI" id="CHEBI:16842"/>
        <dbReference type="ChEBI" id="CHEBI:57818"/>
        <dbReference type="ChEBI" id="CHEBI:58103"/>
        <dbReference type="EC" id="4.2.1.147"/>
    </reaction>
</comment>
<comment type="catalytic activity">
    <reaction evidence="1 2">
        <text>D-ribulose 5-phosphate + formaldehyde = D-arabino-hex-3-ulose 6-phosphate</text>
        <dbReference type="Rhea" id="RHEA:25201"/>
        <dbReference type="ChEBI" id="CHEBI:16842"/>
        <dbReference type="ChEBI" id="CHEBI:58121"/>
        <dbReference type="ChEBI" id="CHEBI:58542"/>
        <dbReference type="EC" id="4.1.2.43"/>
    </reaction>
</comment>
<comment type="pathway">
    <text evidence="1 3">Carbohydrate biosynthesis; D-ribose 5-phosphate biosynthesis.</text>
</comment>
<comment type="similarity">
    <text evidence="1">In the N-terminal section; belongs to the formaldehyde-activating enzyme family.</text>
</comment>
<comment type="similarity">
    <text evidence="1">In the C-terminal section; belongs to the HPS/KGPDC family. HPS subfamily.</text>
</comment>
<reference key="1">
    <citation type="journal article" date="2006" name="J. Bacteriol.">
        <title>The Methanosarcina barkeri genome: comparative analysis with Methanosarcina acetivorans and Methanosarcina mazei reveals extensive rearrangement within methanosarcinal genomes.</title>
        <authorList>
            <person name="Maeder D.L."/>
            <person name="Anderson I."/>
            <person name="Brettin T.S."/>
            <person name="Bruce D.C."/>
            <person name="Gilna P."/>
            <person name="Han C.S."/>
            <person name="Lapidus A."/>
            <person name="Metcalf W.W."/>
            <person name="Saunders E."/>
            <person name="Tapia R."/>
            <person name="Sowers K.R."/>
        </authorList>
    </citation>
    <scope>NUCLEOTIDE SEQUENCE [LARGE SCALE GENOMIC DNA]</scope>
    <source>
        <strain>Fusaro / DSM 804</strain>
    </source>
</reference>
<reference key="2">
    <citation type="journal article" date="2005" name="Arch. Microbiol.">
        <title>Formaldehyde activating enzyme (Fae) and hexulose-6-phosphate synthase (Hps) in Methanosarcina barkeri: a possible function in ribose-5-phosphate biosynthesis.</title>
        <authorList>
            <person name="Goenrich M."/>
            <person name="Thauer R.K."/>
            <person name="Yurimoto H."/>
            <person name="Kato N."/>
        </authorList>
    </citation>
    <scope>FUNCTION</scope>
    <scope>CATALYTIC ACTIVITY</scope>
    <scope>PATHWAY</scope>
    <source>
        <strain>Fusaro / DSM 804</strain>
    </source>
</reference>
<name>FAEHP_METBF</name>
<organism>
    <name type="scientific">Methanosarcina barkeri (strain Fusaro / DSM 804)</name>
    <dbReference type="NCBI Taxonomy" id="269797"/>
    <lineage>
        <taxon>Archaea</taxon>
        <taxon>Methanobacteriati</taxon>
        <taxon>Methanobacteriota</taxon>
        <taxon>Stenosarchaea group</taxon>
        <taxon>Methanomicrobia</taxon>
        <taxon>Methanosarcinales</taxon>
        <taxon>Methanosarcinaceae</taxon>
        <taxon>Methanosarcina</taxon>
    </lineage>
</organism>
<proteinExistence type="evidence at protein level"/>
<accession>Q46DY5</accession>
<keyword id="KW-0119">Carbohydrate metabolism</keyword>
<keyword id="KW-0456">Lyase</keyword>
<keyword id="KW-0511">Multifunctional enzyme</keyword>
<sequence>MFQIGEALMGQGAELAHVDLMIGDKGGPVGQAFANGLTQLSVGHTPLLSVIRPNLPPKPSTLIIPKVTVKNMEQAGKIFGPAQAAVAKAVADSVEEGVISKDQVEEIVIVASVFIHPDAQDYNKIYRYNYGATKLAIKRALGGFPDINTVLEESNKSTHAIMGFKVTRLWDPPYLQVAFDNPDIEFVQSAISQIPKSDHVIIEAGTPLIKRYGMDVISRIREVRPDAFIVADLKTLDTGNLEARMVADAAGDAIVVSALAPISTIDKLIEEAHKTGIYAVMDTLNQQDPISVLKQLKVMPDVIELHRGIDIEATEHAWGNIAEIKKIAPKILVAVAGGVRLDKVPVALGQGADILVVGRAITNSKDVREVAEQFINSLNKPEIDQFRVMTDF</sequence>
<evidence type="ECO:0000255" key="1">
    <source>
        <dbReference type="HAMAP-Rule" id="MF_01268"/>
    </source>
</evidence>
<evidence type="ECO:0000269" key="2">
    <source>
    </source>
</evidence>
<evidence type="ECO:0000303" key="3">
    <source>
    </source>
</evidence>
<dbReference type="EC" id="4.2.1.147" evidence="1 2"/>
<dbReference type="EC" id="4.1.2.43" evidence="1 2"/>
<dbReference type="EMBL" id="CP000099">
    <property type="protein sequence ID" value="AAZ69907.1"/>
    <property type="molecule type" value="Genomic_DNA"/>
</dbReference>
<dbReference type="SMR" id="Q46DY5"/>
<dbReference type="STRING" id="269797.Mbar_A0935"/>
<dbReference type="PaxDb" id="269797-Mbar_A0935"/>
<dbReference type="KEGG" id="mba:Mbar_A0935"/>
<dbReference type="eggNOG" id="arCOG00103">
    <property type="taxonomic scope" value="Archaea"/>
</dbReference>
<dbReference type="HOGENOM" id="CLU_701335_0_0_2"/>
<dbReference type="OrthoDB" id="64276at2157"/>
<dbReference type="UniPathway" id="UPA00293"/>
<dbReference type="GO" id="GO:0033982">
    <property type="term" value="F:3-dehydro-L-gulonate-6-phosphate decarboxylase activity"/>
    <property type="evidence" value="ECO:0007669"/>
    <property type="project" value="TreeGrafter"/>
</dbReference>
<dbReference type="GO" id="GO:0016840">
    <property type="term" value="F:carbon-nitrogen lyase activity"/>
    <property type="evidence" value="ECO:0007669"/>
    <property type="project" value="InterPro"/>
</dbReference>
<dbReference type="GO" id="GO:0043801">
    <property type="term" value="F:hexulose-6-phosphate synthase activity"/>
    <property type="evidence" value="ECO:0007669"/>
    <property type="project" value="UniProtKB-UniRule"/>
</dbReference>
<dbReference type="GO" id="GO:0016836">
    <property type="term" value="F:hydro-lyase activity"/>
    <property type="evidence" value="ECO:0007669"/>
    <property type="project" value="UniProtKB-UniRule"/>
</dbReference>
<dbReference type="GO" id="GO:0004590">
    <property type="term" value="F:orotidine-5'-phosphate decarboxylase activity"/>
    <property type="evidence" value="ECO:0007669"/>
    <property type="project" value="InterPro"/>
</dbReference>
<dbReference type="GO" id="GO:0006207">
    <property type="term" value="P:'de novo' pyrimidine nucleobase biosynthetic process"/>
    <property type="evidence" value="ECO:0007669"/>
    <property type="project" value="InterPro"/>
</dbReference>
<dbReference type="GO" id="GO:0016051">
    <property type="term" value="P:carbohydrate biosynthetic process"/>
    <property type="evidence" value="ECO:0007669"/>
    <property type="project" value="UniProtKB-UniRule"/>
</dbReference>
<dbReference type="GO" id="GO:0019854">
    <property type="term" value="P:L-ascorbic acid catabolic process"/>
    <property type="evidence" value="ECO:0007669"/>
    <property type="project" value="TreeGrafter"/>
</dbReference>
<dbReference type="CDD" id="cd04726">
    <property type="entry name" value="KGPDC_HPS"/>
    <property type="match status" value="1"/>
</dbReference>
<dbReference type="FunFam" id="3.20.20.70:FF:000022">
    <property type="entry name" value="3-keto-L-gulonate-6-phosphate decarboxylase UlaD"/>
    <property type="match status" value="1"/>
</dbReference>
<dbReference type="FunFam" id="3.30.230.60:FF:000001">
    <property type="entry name" value="5,6,7,8-tetrahydromethanopterin hydro-lyase"/>
    <property type="match status" value="1"/>
</dbReference>
<dbReference type="Gene3D" id="3.20.20.70">
    <property type="entry name" value="Aldolase class I"/>
    <property type="match status" value="1"/>
</dbReference>
<dbReference type="Gene3D" id="3.30.230.60">
    <property type="entry name" value="Formaldehyde-activating enzyme"/>
    <property type="match status" value="1"/>
</dbReference>
<dbReference type="HAMAP" id="MF_01268">
    <property type="entry name" value="Fae_Hps"/>
    <property type="match status" value="1"/>
</dbReference>
<dbReference type="InterPro" id="IPR013785">
    <property type="entry name" value="Aldolase_TIM"/>
</dbReference>
<dbReference type="InterPro" id="IPR020868">
    <property type="entry name" value="Fae/Hps"/>
</dbReference>
<dbReference type="InterPro" id="IPR014826">
    <property type="entry name" value="HCHO-activating_enzyme"/>
</dbReference>
<dbReference type="InterPro" id="IPR037075">
    <property type="entry name" value="HCHO-activating_enzyme_sf"/>
</dbReference>
<dbReference type="InterPro" id="IPR041710">
    <property type="entry name" value="HPS/KGPDC"/>
</dbReference>
<dbReference type="InterPro" id="IPR001754">
    <property type="entry name" value="OMPdeCOase_dom"/>
</dbReference>
<dbReference type="InterPro" id="IPR020568">
    <property type="entry name" value="Ribosomal_Su5_D2-typ_SF"/>
</dbReference>
<dbReference type="InterPro" id="IPR011060">
    <property type="entry name" value="RibuloseP-bd_barrel"/>
</dbReference>
<dbReference type="NCBIfam" id="TIGR03126">
    <property type="entry name" value="one_C_fae"/>
    <property type="match status" value="1"/>
</dbReference>
<dbReference type="NCBIfam" id="NF009833">
    <property type="entry name" value="PRK13307.1"/>
    <property type="match status" value="1"/>
</dbReference>
<dbReference type="PANTHER" id="PTHR35039">
    <property type="entry name" value="3-KETO-L-GULONATE-6-PHOSPHATE DECARBOXYLASE SGBH-RELATED"/>
    <property type="match status" value="1"/>
</dbReference>
<dbReference type="PANTHER" id="PTHR35039:SF3">
    <property type="entry name" value="3-KETO-L-GULONATE-6-PHOSPHATE DECARBOXYLASE SGBH-RELATED"/>
    <property type="match status" value="1"/>
</dbReference>
<dbReference type="Pfam" id="PF08714">
    <property type="entry name" value="Fae"/>
    <property type="match status" value="1"/>
</dbReference>
<dbReference type="Pfam" id="PF00215">
    <property type="entry name" value="OMPdecase"/>
    <property type="match status" value="1"/>
</dbReference>
<dbReference type="SMART" id="SM00934">
    <property type="entry name" value="OMPdecase"/>
    <property type="match status" value="1"/>
</dbReference>
<dbReference type="SUPFAM" id="SSF54211">
    <property type="entry name" value="Ribosomal protein S5 domain 2-like"/>
    <property type="match status" value="1"/>
</dbReference>
<dbReference type="SUPFAM" id="SSF51366">
    <property type="entry name" value="Ribulose-phoshate binding barrel"/>
    <property type="match status" value="1"/>
</dbReference>
<gene>
    <name evidence="3" type="primary">faeB-hpsB</name>
    <name type="ordered locus">Mbar_A0935</name>
</gene>
<protein>
    <recommendedName>
        <fullName evidence="1">Bifunctional enzyme Fae/Hps</fullName>
    </recommendedName>
    <domain>
        <recommendedName>
            <fullName evidence="1">5,6,7,8-tetrahydromethanopterin hydro-lyase</fullName>
            <ecNumber evidence="1 2">4.2.1.147</ecNumber>
        </recommendedName>
        <alternativeName>
            <fullName evidence="1 3">Formaldehyde-activating enzyme</fullName>
            <shortName evidence="1 3">Fae</shortName>
        </alternativeName>
    </domain>
    <domain>
        <recommendedName>
            <fullName evidence="1 3">3-hexulose-6-phosphate synthase</fullName>
            <shortName evidence="1 3">HPS</shortName>
            <ecNumber evidence="1 2">4.1.2.43</ecNumber>
        </recommendedName>
        <alternativeName>
            <fullName evidence="1">D-arabino-3-hexulose-6-phosphate formaldehyde lyase</fullName>
        </alternativeName>
    </domain>
</protein>